<keyword id="KW-0002">3D-structure</keyword>
<keyword id="KW-0067">ATP-binding</keyword>
<keyword id="KW-0235">DNA replication</keyword>
<keyword id="KW-0238">DNA-binding</keyword>
<keyword id="KW-0347">Helicase</keyword>
<keyword id="KW-0378">Hydrolase</keyword>
<keyword id="KW-0413">Isomerase</keyword>
<keyword id="KW-0479">Metal-binding</keyword>
<keyword id="KW-0547">Nucleotide-binding</keyword>
<keyword id="KW-0639">Primosome</keyword>
<keyword id="KW-0862">Zinc</keyword>
<sequence>MSVAHVALPVPLPRTFDYLLPEGMAVKAGCRVRVPFGKQERIGIVAAVSERSELPLDELKPVAEALDDEPVFSTTVWRLLMWAAEYYHHPIGDVLFHALPVMLRQGKPASATPLWYWFATEQGQVVDLNGLKRSRKQQQALAALRQGKIWRHQVGELEFNEAALQALRGKGLAELACEAPALTDWRSAYSVAGERLRLNTEQATAVGAIHSAADRFSAWLLAGITGSGKTEVYLSVLENVLAQGRQALVMVPEIGLTPQTIARFRQRFNAPVEVLHSGLNDSERLSAWLKAKNGEAAIVIGTRSSLFTPFKDLGVIVIDEEHDSSYKQQEGWRYHARDLAVWRAHSEQIPIILGSATPALETLHNVRQGKYRQLTLSKRAGNARPAQQHVLDLKGQPLQAGLSPALISRMRQHLQADNQVILFLNRRGFAPALLCHDCGWIAECPRCDSYYTLHQAQHHLRCHHCDSQRPIPRQCPSCGSTHLVPVGIGTEQLEQALAPLFPEVPISRIDRDTTSRKGALEEHLAAVHRGGARILIGTQMLAKGHHFPDVTLVSLLDVDGALFSADFRSAERFAQLYTQVSGRAGRAGKQGEVILQTHHPEHPLLQTLLYKGYDAFAEQALAERQTMQLPPWTSHVLIRAEDHNNQQAPLFLQQLRNLLQASPLADEKLWVLGPVPALAPKRGGRWRWQILLQHPSRVRLQHIVSGTLALINTLPEARKVKWVLDVDPIEG</sequence>
<evidence type="ECO:0000255" key="1">
    <source>
        <dbReference type="HAMAP-Rule" id="MF_00983"/>
    </source>
</evidence>
<evidence type="ECO:0000269" key="2">
    <source>
    </source>
</evidence>
<evidence type="ECO:0000269" key="3">
    <source>
    </source>
</evidence>
<evidence type="ECO:0000303" key="4">
    <source>
    </source>
</evidence>
<evidence type="ECO:0000305" key="5"/>
<evidence type="ECO:0000305" key="6">
    <source>
    </source>
</evidence>
<evidence type="ECO:0000312" key="7">
    <source>
        <dbReference type="EMBL" id="ABR79609.1"/>
    </source>
</evidence>
<evidence type="ECO:0007744" key="8">
    <source>
        <dbReference type="PDB" id="4NL4"/>
    </source>
</evidence>
<evidence type="ECO:0007744" key="9">
    <source>
        <dbReference type="PDB" id="4NL8"/>
    </source>
</evidence>
<evidence type="ECO:0007744" key="10">
    <source>
        <dbReference type="PDB" id="6DGD"/>
    </source>
</evidence>
<protein>
    <recommendedName>
        <fullName evidence="1">Replication restart protein PriA</fullName>
    </recommendedName>
    <alternativeName>
        <fullName evidence="1">ATP-dependent DNA helicase PriA</fullName>
        <ecNumber evidence="1 6">5.6.2.4</ecNumber>
    </alternativeName>
    <alternativeName>
        <fullName evidence="1 5">DNA 3'-5' helicase PriA</fullName>
    </alternativeName>
    <alternativeName>
        <fullName evidence="4">PriA DNA helicase</fullName>
    </alternativeName>
</protein>
<proteinExistence type="evidence at protein level"/>
<name>PRIA_KLEP7</name>
<comment type="function">
    <text evidence="1">Initiates the restart of stalled replication forks, which reloads the replicative helicase on sites other than the origin of replication. Recognizes and binds to abandoned replication forks and remodels them to uncover a helicase loading site. Promotes assembly of the primosome at these replication forks.</text>
</comment>
<comment type="function">
    <text evidence="2">Recognizes abandoned replication forks and remodels SSB on ssDNA to uncover a loading site for DnaB (PubMed:24379377). Binds replication fork DNA, has DNA-dependent ATPase activity in the presence of replication fork DNA, restores normal cell growth and SOS induction to E.coli mutant pirA304 (PubMed:24379377).</text>
</comment>
<comment type="catalytic activity">
    <reaction evidence="1">
        <text>Couples ATP hydrolysis with the unwinding of duplex DNA by translocating in the 3'-5' direction.</text>
        <dbReference type="EC" id="5.6.2.4"/>
    </reaction>
</comment>
<comment type="catalytic activity">
    <reaction evidence="1 2 3">
        <text>ATP + H2O = ADP + phosphate + H(+)</text>
        <dbReference type="Rhea" id="RHEA:13065"/>
        <dbReference type="ChEBI" id="CHEBI:15377"/>
        <dbReference type="ChEBI" id="CHEBI:15378"/>
        <dbReference type="ChEBI" id="CHEBI:30616"/>
        <dbReference type="ChEBI" id="CHEBI:43474"/>
        <dbReference type="ChEBI" id="CHEBI:456216"/>
        <dbReference type="EC" id="5.6.2.4"/>
    </reaction>
</comment>
<comment type="cofactor">
    <cofactor evidence="1 2 8">
        <name>Zn(2+)</name>
        <dbReference type="ChEBI" id="CHEBI:29105"/>
    </cofactor>
    <text evidence="1 2 8">Binds 2 zinc ions per subunit.</text>
</comment>
<comment type="activity regulation">
    <text evidence="3">ATPase activity is stimulated by single-stranded binding protein (SSB).</text>
</comment>
<comment type="subunit">
    <text evidence="1 2">Binds SSB (PubMed:24379377). Component of the replication restart primosome.</text>
</comment>
<comment type="domain">
    <text evidence="2">Has an N-terminal DNA-binding domain (residues 1-177) with 2 subdomains and a C-terminal helicase domain (residues 200-731) with 4 subdomains (PubMed:24379377, PubMed:30201718). The 3' DNA-binding domain (3'BD), bilobed helicase core, Cys-rich region (CRR), and C-terminal domain (CTD) interact with one another to form a shallow cup (PubMed:24379377, PubMed:30201718). The circularly permuted winged helix domain (WH) projects away from the cup and is quite mobile (PubMed:24379377, PubMed:30201718). Nucleotide (ADP) binds between the 2 helicase lobes, while the surface-localized CRR binds 2 zinc ions (PubMed:24379377, PubMed:30201718). The aromatic-rich loop (ARL) probably directly binds DNA.</text>
</comment>
<comment type="similarity">
    <text evidence="1">Belongs to the helicase family. PriA subfamily.</text>
</comment>
<organism>
    <name type="scientific">Klebsiella pneumoniae subsp. pneumoniae (strain ATCC 700721 / MGH 78578)</name>
    <dbReference type="NCBI Taxonomy" id="272620"/>
    <lineage>
        <taxon>Bacteria</taxon>
        <taxon>Pseudomonadati</taxon>
        <taxon>Pseudomonadota</taxon>
        <taxon>Gammaproteobacteria</taxon>
        <taxon>Enterobacterales</taxon>
        <taxon>Enterobacteriaceae</taxon>
        <taxon>Klebsiella/Raoultella group</taxon>
        <taxon>Klebsiella</taxon>
        <taxon>Klebsiella pneumoniae complex</taxon>
    </lineage>
</organism>
<gene>
    <name evidence="1 7" type="primary">priA</name>
    <name evidence="7" type="ORF">KPN_04230</name>
</gene>
<feature type="chain" id="PRO_0000462142" description="Replication restart protein PriA">
    <location>
        <begin position="1"/>
        <end position="731"/>
    </location>
</feature>
<feature type="domain" description="Helicase ATP-binding" evidence="1">
    <location>
        <begin position="210"/>
        <end position="376"/>
    </location>
</feature>
<feature type="domain" description="Helicase C-terminal" evidence="1">
    <location>
        <begin position="470"/>
        <end position="637"/>
    </location>
</feature>
<feature type="region of interest" description="3'BD" evidence="2">
    <location>
        <begin position="1"/>
        <end position="98"/>
    </location>
</feature>
<feature type="region of interest" description="WH" evidence="2">
    <location>
        <begin position="115"/>
        <end position="177"/>
    </location>
</feature>
<feature type="region of interest" description="Helicase lobe 1" evidence="2">
    <location>
        <begin position="200"/>
        <end position="375"/>
    </location>
</feature>
<feature type="region of interest" description="Helicase lobe 2, N-terminus" evidence="2">
    <location>
        <begin position="387"/>
        <end position="430"/>
    </location>
</feature>
<feature type="region of interest" description="CRR" evidence="2">
    <location>
        <begin position="431"/>
        <end position="485"/>
    </location>
</feature>
<feature type="region of interest" description="Helicase lobe 2, C-terminus" evidence="2">
    <location>
        <begin position="486"/>
        <end position="626"/>
    </location>
</feature>
<feature type="region of interest" description="CTD" evidence="2">
    <location>
        <begin position="633"/>
        <end position="731"/>
    </location>
</feature>
<feature type="short sequence motif" description="DEAH box" evidence="1">
    <location>
        <begin position="319"/>
        <end position="322"/>
    </location>
</feature>
<feature type="short sequence motif" description="Aromatic-rich loop (ARL)" evidence="2">
    <location>
        <begin position="326"/>
        <end position="340"/>
    </location>
</feature>
<feature type="binding site" evidence="1">
    <location>
        <begin position="223"/>
        <end position="230"/>
    </location>
    <ligand>
        <name>ATP</name>
        <dbReference type="ChEBI" id="CHEBI:30616"/>
    </ligand>
</feature>
<feature type="binding site" evidence="8">
    <location>
        <position position="226"/>
    </location>
    <ligand>
        <name>ADP</name>
        <dbReference type="ChEBI" id="CHEBI:456216"/>
    </ligand>
</feature>
<feature type="binding site" evidence="8">
    <location>
        <position position="228"/>
    </location>
    <ligand>
        <name>ADP</name>
        <dbReference type="ChEBI" id="CHEBI:456216"/>
    </ligand>
</feature>
<feature type="binding site" evidence="8">
    <location>
        <position position="229"/>
    </location>
    <ligand>
        <name>ADP</name>
        <dbReference type="ChEBI" id="CHEBI:456216"/>
    </ligand>
</feature>
<feature type="binding site" evidence="8">
    <location>
        <position position="230"/>
    </location>
    <ligand>
        <name>ADP</name>
        <dbReference type="ChEBI" id="CHEBI:456216"/>
    </ligand>
</feature>
<feature type="binding site" evidence="8">
    <location>
        <position position="231"/>
    </location>
    <ligand>
        <name>ADP</name>
        <dbReference type="ChEBI" id="CHEBI:456216"/>
    </ligand>
</feature>
<feature type="binding site" evidence="8">
    <location>
        <position position="263"/>
    </location>
    <ligand>
        <name>ADP</name>
        <dbReference type="ChEBI" id="CHEBI:456216"/>
    </ligand>
</feature>
<feature type="binding site" evidence="1 8 9 10">
    <location>
        <position position="435"/>
    </location>
    <ligand>
        <name>Zn(2+)</name>
        <dbReference type="ChEBI" id="CHEBI:29105"/>
        <label>1</label>
    </ligand>
</feature>
<feature type="binding site" evidence="1 8 9 10">
    <location>
        <position position="438"/>
    </location>
    <ligand>
        <name>Zn(2+)</name>
        <dbReference type="ChEBI" id="CHEBI:29105"/>
        <label>1</label>
    </ligand>
</feature>
<feature type="binding site" evidence="1 8 9 10">
    <location>
        <position position="444"/>
    </location>
    <ligand>
        <name>Zn(2+)</name>
        <dbReference type="ChEBI" id="CHEBI:29105"/>
        <label>2</label>
    </ligand>
</feature>
<feature type="binding site" evidence="1 8 9 10">
    <location>
        <position position="447"/>
    </location>
    <ligand>
        <name>Zn(2+)</name>
        <dbReference type="ChEBI" id="CHEBI:29105"/>
        <label>2</label>
    </ligand>
</feature>
<feature type="binding site" evidence="1 8 9 10">
    <location>
        <position position="462"/>
    </location>
    <ligand>
        <name>Zn(2+)</name>
        <dbReference type="ChEBI" id="CHEBI:29105"/>
        <label>2</label>
    </ligand>
</feature>
<feature type="binding site" evidence="1 8 9 10">
    <location>
        <position position="465"/>
    </location>
    <ligand>
        <name>Zn(2+)</name>
        <dbReference type="ChEBI" id="CHEBI:29105"/>
        <label>2</label>
    </ligand>
</feature>
<feature type="binding site" evidence="1 8 9 10">
    <location>
        <position position="475"/>
    </location>
    <ligand>
        <name>Zn(2+)</name>
        <dbReference type="ChEBI" id="CHEBI:29105"/>
        <label>1</label>
    </ligand>
</feature>
<feature type="binding site" evidence="1 8 9 10">
    <location>
        <position position="478"/>
    </location>
    <ligand>
        <name>Zn(2+)</name>
        <dbReference type="ChEBI" id="CHEBI:29105"/>
        <label>1</label>
    </ligand>
</feature>
<feature type="binding site" evidence="2 8">
    <location>
        <position position="543"/>
    </location>
    <ligand>
        <name>ADP</name>
        <dbReference type="ChEBI" id="CHEBI:456216"/>
    </ligand>
</feature>
<dbReference type="EC" id="5.6.2.4" evidence="1 6"/>
<dbReference type="EMBL" id="CP000647">
    <property type="protein sequence ID" value="ABR79609.1"/>
    <property type="molecule type" value="Genomic_DNA"/>
</dbReference>
<dbReference type="RefSeq" id="WP_004177997.1">
    <property type="nucleotide sequence ID" value="NC_009648.1"/>
</dbReference>
<dbReference type="PDB" id="4NL4">
    <property type="method" value="X-ray"/>
    <property type="resolution" value="2.65 A"/>
    <property type="chains" value="H=1-731"/>
</dbReference>
<dbReference type="PDB" id="4NL8">
    <property type="method" value="X-ray"/>
    <property type="resolution" value="4.08 A"/>
    <property type="chains" value="A/B/E=1-731"/>
</dbReference>
<dbReference type="PDB" id="6DGD">
    <property type="method" value="X-ray"/>
    <property type="resolution" value="2.82 A"/>
    <property type="chains" value="A/B=1-731"/>
</dbReference>
<dbReference type="PDBsum" id="4NL4"/>
<dbReference type="PDBsum" id="4NL8"/>
<dbReference type="PDBsum" id="6DGD"/>
<dbReference type="SMR" id="A6TGC5"/>
<dbReference type="STRING" id="272620.KPN_04230"/>
<dbReference type="PaxDb" id="272620-KPN_04230"/>
<dbReference type="EnsemblBacteria" id="ABR79609">
    <property type="protein sequence ID" value="ABR79609"/>
    <property type="gene ID" value="KPN_04230"/>
</dbReference>
<dbReference type="KEGG" id="kpn:KPN_04230"/>
<dbReference type="HOGENOM" id="CLU_013353_3_1_6"/>
<dbReference type="EvolutionaryTrace" id="A6TGC5"/>
<dbReference type="Proteomes" id="UP000000265">
    <property type="component" value="Chromosome"/>
</dbReference>
<dbReference type="GO" id="GO:1990077">
    <property type="term" value="C:primosome complex"/>
    <property type="evidence" value="ECO:0007669"/>
    <property type="project" value="UniProtKB-UniRule"/>
</dbReference>
<dbReference type="GO" id="GO:0043138">
    <property type="term" value="F:3'-5' DNA helicase activity"/>
    <property type="evidence" value="ECO:0007669"/>
    <property type="project" value="TreeGrafter"/>
</dbReference>
<dbReference type="GO" id="GO:0005524">
    <property type="term" value="F:ATP binding"/>
    <property type="evidence" value="ECO:0007669"/>
    <property type="project" value="UniProtKB-UniRule"/>
</dbReference>
<dbReference type="GO" id="GO:0016887">
    <property type="term" value="F:ATP hydrolysis activity"/>
    <property type="evidence" value="ECO:0007669"/>
    <property type="project" value="RHEA"/>
</dbReference>
<dbReference type="GO" id="GO:0003677">
    <property type="term" value="F:DNA binding"/>
    <property type="evidence" value="ECO:0007669"/>
    <property type="project" value="UniProtKB-UniRule"/>
</dbReference>
<dbReference type="GO" id="GO:0008270">
    <property type="term" value="F:zinc ion binding"/>
    <property type="evidence" value="ECO:0007669"/>
    <property type="project" value="UniProtKB-UniRule"/>
</dbReference>
<dbReference type="GO" id="GO:0006310">
    <property type="term" value="P:DNA recombination"/>
    <property type="evidence" value="ECO:0007669"/>
    <property type="project" value="InterPro"/>
</dbReference>
<dbReference type="GO" id="GO:0006270">
    <property type="term" value="P:DNA replication initiation"/>
    <property type="evidence" value="ECO:0007669"/>
    <property type="project" value="TreeGrafter"/>
</dbReference>
<dbReference type="GO" id="GO:0006269">
    <property type="term" value="P:DNA replication, synthesis of primer"/>
    <property type="evidence" value="ECO:0007669"/>
    <property type="project" value="UniProtKB-KW"/>
</dbReference>
<dbReference type="GO" id="GO:0006302">
    <property type="term" value="P:double-strand break repair"/>
    <property type="evidence" value="ECO:0007669"/>
    <property type="project" value="InterPro"/>
</dbReference>
<dbReference type="CDD" id="cd17929">
    <property type="entry name" value="DEXHc_priA"/>
    <property type="match status" value="1"/>
</dbReference>
<dbReference type="CDD" id="cd18804">
    <property type="entry name" value="SF2_C_priA"/>
    <property type="match status" value="1"/>
</dbReference>
<dbReference type="FunFam" id="3.40.1440.60:FF:000001">
    <property type="entry name" value="Primosomal protein N"/>
    <property type="match status" value="1"/>
</dbReference>
<dbReference type="FunFam" id="3.40.50.300:FF:001397">
    <property type="entry name" value="Primosomal protein N"/>
    <property type="match status" value="1"/>
</dbReference>
<dbReference type="FunFam" id="3.40.50.300:FF:000489">
    <property type="entry name" value="Primosome assembly protein PriA"/>
    <property type="match status" value="1"/>
</dbReference>
<dbReference type="Gene3D" id="3.40.50.300">
    <property type="entry name" value="P-loop containing nucleotide triphosphate hydrolases"/>
    <property type="match status" value="2"/>
</dbReference>
<dbReference type="Gene3D" id="3.40.1440.60">
    <property type="entry name" value="PriA, 3(prime) DNA-binding domain"/>
    <property type="match status" value="1"/>
</dbReference>
<dbReference type="HAMAP" id="MF_00983">
    <property type="entry name" value="PriA"/>
    <property type="match status" value="1"/>
</dbReference>
<dbReference type="InterPro" id="IPR011545">
    <property type="entry name" value="DEAD/DEAH_box_helicase_dom"/>
</dbReference>
<dbReference type="InterPro" id="IPR014001">
    <property type="entry name" value="Helicase_ATP-bd"/>
</dbReference>
<dbReference type="InterPro" id="IPR001650">
    <property type="entry name" value="Helicase_C-like"/>
</dbReference>
<dbReference type="InterPro" id="IPR027417">
    <property type="entry name" value="P-loop_NTPase"/>
</dbReference>
<dbReference type="InterPro" id="IPR005259">
    <property type="entry name" value="PriA"/>
</dbReference>
<dbReference type="InterPro" id="IPR048949">
    <property type="entry name" value="PriA-like_WH"/>
</dbReference>
<dbReference type="InterPro" id="IPR041222">
    <property type="entry name" value="PriA_3primeBD"/>
</dbReference>
<dbReference type="InterPro" id="IPR042115">
    <property type="entry name" value="PriA_3primeBD_sf"/>
</dbReference>
<dbReference type="InterPro" id="IPR041236">
    <property type="entry name" value="PriA_C"/>
</dbReference>
<dbReference type="InterPro" id="IPR040498">
    <property type="entry name" value="PriA_CRR"/>
</dbReference>
<dbReference type="InterPro" id="IPR050880">
    <property type="entry name" value="PriA_helicase"/>
</dbReference>
<dbReference type="NCBIfam" id="TIGR00595">
    <property type="entry name" value="priA"/>
    <property type="match status" value="1"/>
</dbReference>
<dbReference type="NCBIfam" id="NF004065">
    <property type="entry name" value="PRK05580.1-1"/>
    <property type="match status" value="1"/>
</dbReference>
<dbReference type="NCBIfam" id="NF004067">
    <property type="entry name" value="PRK05580.1-4"/>
    <property type="match status" value="1"/>
</dbReference>
<dbReference type="PANTHER" id="PTHR30580">
    <property type="entry name" value="PRIMOSOMAL PROTEIN N"/>
    <property type="match status" value="1"/>
</dbReference>
<dbReference type="PANTHER" id="PTHR30580:SF0">
    <property type="entry name" value="PRIMOSOMAL PROTEIN N"/>
    <property type="match status" value="1"/>
</dbReference>
<dbReference type="Pfam" id="PF00270">
    <property type="entry name" value="DEAD"/>
    <property type="match status" value="1"/>
</dbReference>
<dbReference type="Pfam" id="PF00271">
    <property type="entry name" value="Helicase_C"/>
    <property type="match status" value="1"/>
</dbReference>
<dbReference type="Pfam" id="PF21213">
    <property type="entry name" value="PriA-like_WH"/>
    <property type="match status" value="1"/>
</dbReference>
<dbReference type="Pfam" id="PF17764">
    <property type="entry name" value="PriA_3primeBD"/>
    <property type="match status" value="1"/>
</dbReference>
<dbReference type="Pfam" id="PF18074">
    <property type="entry name" value="PriA_C"/>
    <property type="match status" value="1"/>
</dbReference>
<dbReference type="Pfam" id="PF18319">
    <property type="entry name" value="Zn_ribbon_PriA"/>
    <property type="match status" value="1"/>
</dbReference>
<dbReference type="SMART" id="SM00487">
    <property type="entry name" value="DEXDc"/>
    <property type="match status" value="1"/>
</dbReference>
<dbReference type="SMART" id="SM00490">
    <property type="entry name" value="HELICc"/>
    <property type="match status" value="1"/>
</dbReference>
<dbReference type="SUPFAM" id="SSF52540">
    <property type="entry name" value="P-loop containing nucleoside triphosphate hydrolases"/>
    <property type="match status" value="1"/>
</dbReference>
<dbReference type="PROSITE" id="PS51192">
    <property type="entry name" value="HELICASE_ATP_BIND_1"/>
    <property type="match status" value="1"/>
</dbReference>
<dbReference type="PROSITE" id="PS51194">
    <property type="entry name" value="HELICASE_CTER"/>
    <property type="match status" value="1"/>
</dbReference>
<accession>A6TGC5</accession>
<reference evidence="7" key="1">
    <citation type="submission" date="2006-09" db="EMBL/GenBank/DDBJ databases">
        <authorList>
            <consortium name="The Klebsiella pneumonia Genome Sequencing Project"/>
            <person name="McClelland M."/>
            <person name="Sanderson E.K."/>
            <person name="Spieth J."/>
            <person name="Clifton W.S."/>
            <person name="Latreille P."/>
            <person name="Sabo A."/>
            <person name="Pepin K."/>
            <person name="Bhonagiri V."/>
            <person name="Porwollik S."/>
            <person name="Ali J."/>
            <person name="Wilson R.K."/>
        </authorList>
    </citation>
    <scope>NUCLEOTIDE SEQUENCE [LARGE SCALE GENOMIC DNA]</scope>
    <source>
        <strain>ATCC 700721 / MGH 78578</strain>
    </source>
</reference>
<reference key="2">
    <citation type="journal article" date="2021" name="Int. J. Mol. Sci.">
        <title>Characterization of the Chimeric PriB-SSBc Protein.</title>
        <authorList>
            <person name="Lin E.S."/>
            <person name="Huang Y.H."/>
            <person name="Huang C.Y."/>
        </authorList>
    </citation>
    <scope>FUNCTION AS AN ATPASE</scope>
    <scope>ACTIVITY REGULATION</scope>
</reference>
<reference evidence="8 9" key="3">
    <citation type="journal article" date="2014" name="Proc. Natl. Acad. Sci. U.S.A.">
        <title>Structural mechanisms of PriA-mediated DNA replication restart.</title>
        <authorList>
            <person name="Bhattacharyya B."/>
            <person name="George N.P."/>
            <person name="Thurmes T.M."/>
            <person name="Zhou R."/>
            <person name="Jani N."/>
            <person name="Wessel S.R."/>
            <person name="Sandler S.J."/>
            <person name="Ha T."/>
            <person name="Keck J.L."/>
        </authorList>
    </citation>
    <scope>X-RAY CRYSTALLOGRAPHY (2.65 ANGSTROMS) IN COMPLEX WITH ADP AND ZN(2+)</scope>
    <scope>X-RAY CRYSTALLOGRAPHY (4.08 ANGSTROMS) IN COMPLEX WITH SSB</scope>
    <scope>FUNCTION AS AN ATPASE</scope>
    <scope>CATALYTIC ACTIVITY</scope>
    <scope>DOMAIN</scope>
    <scope>DNA-BINDING</scope>
    <source>
        <strain>ATCC 700721 / MGH 78578</strain>
    </source>
</reference>
<reference evidence="10" key="4">
    <citation type="journal article" date="2018" name="Proc. Natl. Acad. Sci. U.S.A.">
        <title>Structure-specific DNA replication-fork recognition directs helicase and replication restart activities of the PriA helicase.</title>
        <authorList>
            <person name="Windgassen T.A."/>
            <person name="Leroux M."/>
            <person name="Satyshur K.A."/>
            <person name="Sandler S.J."/>
            <person name="Keck J.L."/>
        </authorList>
    </citation>
    <scope>X-RAY CRYSTALLOGRAPHY (2.82 ANGSTROMS) IN COMPLEX WITH ZN(2+) AND REPLICATION FORK DNA</scope>
    <scope>DOMAIN</scope>
</reference>